<dbReference type="EC" id="4.2.1.59" evidence="1"/>
<dbReference type="EMBL" id="AM260479">
    <property type="protein sequence ID" value="CAJ93144.1"/>
    <property type="molecule type" value="Genomic_DNA"/>
</dbReference>
<dbReference type="RefSeq" id="WP_010809590.1">
    <property type="nucleotide sequence ID" value="NZ_CP039287.1"/>
</dbReference>
<dbReference type="SMR" id="Q0KA27"/>
<dbReference type="STRING" id="381666.H16_A2044"/>
<dbReference type="GeneID" id="29761318"/>
<dbReference type="KEGG" id="reh:H16_A2044"/>
<dbReference type="eggNOG" id="COG0764">
    <property type="taxonomic scope" value="Bacteria"/>
</dbReference>
<dbReference type="HOGENOM" id="CLU_078912_1_0_4"/>
<dbReference type="OrthoDB" id="9772788at2"/>
<dbReference type="Proteomes" id="UP000008210">
    <property type="component" value="Chromosome 1"/>
</dbReference>
<dbReference type="GO" id="GO:0005737">
    <property type="term" value="C:cytoplasm"/>
    <property type="evidence" value="ECO:0007669"/>
    <property type="project" value="UniProtKB-SubCell"/>
</dbReference>
<dbReference type="GO" id="GO:0016020">
    <property type="term" value="C:membrane"/>
    <property type="evidence" value="ECO:0007669"/>
    <property type="project" value="GOC"/>
</dbReference>
<dbReference type="GO" id="GO:0019171">
    <property type="term" value="F:(3R)-hydroxyacyl-[acyl-carrier-protein] dehydratase activity"/>
    <property type="evidence" value="ECO:0007669"/>
    <property type="project" value="UniProtKB-EC"/>
</dbReference>
<dbReference type="GO" id="GO:0006633">
    <property type="term" value="P:fatty acid biosynthetic process"/>
    <property type="evidence" value="ECO:0007669"/>
    <property type="project" value="UniProtKB-UniRule"/>
</dbReference>
<dbReference type="GO" id="GO:0009245">
    <property type="term" value="P:lipid A biosynthetic process"/>
    <property type="evidence" value="ECO:0007669"/>
    <property type="project" value="UniProtKB-UniRule"/>
</dbReference>
<dbReference type="CDD" id="cd01288">
    <property type="entry name" value="FabZ"/>
    <property type="match status" value="1"/>
</dbReference>
<dbReference type="FunFam" id="3.10.129.10:FF:000001">
    <property type="entry name" value="3-hydroxyacyl-[acyl-carrier-protein] dehydratase FabZ"/>
    <property type="match status" value="1"/>
</dbReference>
<dbReference type="Gene3D" id="3.10.129.10">
    <property type="entry name" value="Hotdog Thioesterase"/>
    <property type="match status" value="1"/>
</dbReference>
<dbReference type="HAMAP" id="MF_00406">
    <property type="entry name" value="FabZ"/>
    <property type="match status" value="1"/>
</dbReference>
<dbReference type="InterPro" id="IPR013114">
    <property type="entry name" value="FabA_FabZ"/>
</dbReference>
<dbReference type="InterPro" id="IPR010084">
    <property type="entry name" value="FabZ"/>
</dbReference>
<dbReference type="InterPro" id="IPR029069">
    <property type="entry name" value="HotDog_dom_sf"/>
</dbReference>
<dbReference type="NCBIfam" id="TIGR01750">
    <property type="entry name" value="fabZ"/>
    <property type="match status" value="1"/>
</dbReference>
<dbReference type="NCBIfam" id="NF000582">
    <property type="entry name" value="PRK00006.1"/>
    <property type="match status" value="1"/>
</dbReference>
<dbReference type="PANTHER" id="PTHR30272">
    <property type="entry name" value="3-HYDROXYACYL-[ACYL-CARRIER-PROTEIN] DEHYDRATASE"/>
    <property type="match status" value="1"/>
</dbReference>
<dbReference type="PANTHER" id="PTHR30272:SF1">
    <property type="entry name" value="3-HYDROXYACYL-[ACYL-CARRIER-PROTEIN] DEHYDRATASE"/>
    <property type="match status" value="1"/>
</dbReference>
<dbReference type="Pfam" id="PF07977">
    <property type="entry name" value="FabA"/>
    <property type="match status" value="1"/>
</dbReference>
<dbReference type="SUPFAM" id="SSF54637">
    <property type="entry name" value="Thioesterase/thiol ester dehydrase-isomerase"/>
    <property type="match status" value="1"/>
</dbReference>
<protein>
    <recommendedName>
        <fullName evidence="1">3-hydroxyacyl-[acyl-carrier-protein] dehydratase FabZ</fullName>
        <ecNumber evidence="1">4.2.1.59</ecNumber>
    </recommendedName>
    <alternativeName>
        <fullName evidence="1">(3R)-hydroxymyristoyl-[acyl-carrier-protein] dehydratase</fullName>
        <shortName evidence="1">(3R)-hydroxymyristoyl-ACP dehydrase</shortName>
    </alternativeName>
    <alternativeName>
        <fullName evidence="1">Beta-hydroxyacyl-ACP dehydratase</fullName>
    </alternativeName>
</protein>
<sequence length="149" mass="17027">MSAAEIDIRKILKLLPHRYPFLLVDRVLEFEAQKRIKTLKNVTINEPYFQGHFPEQPVMPGVMILEALAQSAGLLTFGADMERKEGALYYFVGIDGARFKQVVYPGDQLHMNVTVERYIRGIWKFKAFATVDDKVACEAELMCTVKQAE</sequence>
<keyword id="KW-0963">Cytoplasm</keyword>
<keyword id="KW-0441">Lipid A biosynthesis</keyword>
<keyword id="KW-0444">Lipid biosynthesis</keyword>
<keyword id="KW-0443">Lipid metabolism</keyword>
<keyword id="KW-0456">Lyase</keyword>
<keyword id="KW-1185">Reference proteome</keyword>
<organism>
    <name type="scientific">Cupriavidus necator (strain ATCC 17699 / DSM 428 / KCTC 22496 / NCIMB 10442 / H16 / Stanier 337)</name>
    <name type="common">Ralstonia eutropha</name>
    <dbReference type="NCBI Taxonomy" id="381666"/>
    <lineage>
        <taxon>Bacteria</taxon>
        <taxon>Pseudomonadati</taxon>
        <taxon>Pseudomonadota</taxon>
        <taxon>Betaproteobacteria</taxon>
        <taxon>Burkholderiales</taxon>
        <taxon>Burkholderiaceae</taxon>
        <taxon>Cupriavidus</taxon>
    </lineage>
</organism>
<accession>Q0KA27</accession>
<feature type="chain" id="PRO_0000301916" description="3-hydroxyacyl-[acyl-carrier-protein] dehydratase FabZ">
    <location>
        <begin position="1"/>
        <end position="149"/>
    </location>
</feature>
<feature type="active site" evidence="1">
    <location>
        <position position="52"/>
    </location>
</feature>
<reference key="1">
    <citation type="journal article" date="2006" name="Nat. Biotechnol.">
        <title>Genome sequence of the bioplastic-producing 'Knallgas' bacterium Ralstonia eutropha H16.</title>
        <authorList>
            <person name="Pohlmann A."/>
            <person name="Fricke W.F."/>
            <person name="Reinecke F."/>
            <person name="Kusian B."/>
            <person name="Liesegang H."/>
            <person name="Cramm R."/>
            <person name="Eitinger T."/>
            <person name="Ewering C."/>
            <person name="Poetter M."/>
            <person name="Schwartz E."/>
            <person name="Strittmatter A."/>
            <person name="Voss I."/>
            <person name="Gottschalk G."/>
            <person name="Steinbuechel A."/>
            <person name="Friedrich B."/>
            <person name="Bowien B."/>
        </authorList>
    </citation>
    <scope>NUCLEOTIDE SEQUENCE [LARGE SCALE GENOMIC DNA]</scope>
    <source>
        <strain>ATCC 17699 / DSM 428 / KCTC 22496 / NCIMB 10442 / H16 / Stanier 337</strain>
    </source>
</reference>
<comment type="function">
    <text evidence="1">Involved in unsaturated fatty acids biosynthesis. Catalyzes the dehydration of short chain beta-hydroxyacyl-ACPs and long chain saturated and unsaturated beta-hydroxyacyl-ACPs.</text>
</comment>
<comment type="catalytic activity">
    <reaction evidence="1">
        <text>a (3R)-hydroxyacyl-[ACP] = a (2E)-enoyl-[ACP] + H2O</text>
        <dbReference type="Rhea" id="RHEA:13097"/>
        <dbReference type="Rhea" id="RHEA-COMP:9925"/>
        <dbReference type="Rhea" id="RHEA-COMP:9945"/>
        <dbReference type="ChEBI" id="CHEBI:15377"/>
        <dbReference type="ChEBI" id="CHEBI:78784"/>
        <dbReference type="ChEBI" id="CHEBI:78827"/>
        <dbReference type="EC" id="4.2.1.59"/>
    </reaction>
</comment>
<comment type="subcellular location">
    <subcellularLocation>
        <location evidence="1">Cytoplasm</location>
    </subcellularLocation>
</comment>
<comment type="similarity">
    <text evidence="1">Belongs to the thioester dehydratase family. FabZ subfamily.</text>
</comment>
<name>FABZ_CUPNH</name>
<evidence type="ECO:0000255" key="1">
    <source>
        <dbReference type="HAMAP-Rule" id="MF_00406"/>
    </source>
</evidence>
<proteinExistence type="inferred from homology"/>
<gene>
    <name evidence="1" type="primary">fabZ</name>
    <name type="ordered locus">H16_A2044</name>
</gene>